<comment type="function">
    <text evidence="1">Catalyzes a reversible aldol reaction between acetaldehyde and D-glyceraldehyde 3-phosphate to generate 2-deoxy-D-ribose 5-phosphate.</text>
</comment>
<comment type="catalytic activity">
    <reaction evidence="1">
        <text>2-deoxy-D-ribose 5-phosphate = D-glyceraldehyde 3-phosphate + acetaldehyde</text>
        <dbReference type="Rhea" id="RHEA:12821"/>
        <dbReference type="ChEBI" id="CHEBI:15343"/>
        <dbReference type="ChEBI" id="CHEBI:59776"/>
        <dbReference type="ChEBI" id="CHEBI:62877"/>
        <dbReference type="EC" id="4.1.2.4"/>
    </reaction>
</comment>
<comment type="pathway">
    <text evidence="1">Carbohydrate degradation; 2-deoxy-D-ribose 1-phosphate degradation; D-glyceraldehyde 3-phosphate and acetaldehyde from 2-deoxy-alpha-D-ribose 1-phosphate: step 2/2.</text>
</comment>
<comment type="subcellular location">
    <subcellularLocation>
        <location evidence="1">Cytoplasm</location>
    </subcellularLocation>
</comment>
<comment type="similarity">
    <text evidence="1">Belongs to the DeoC/FbaB aldolase family. DeoC type 1 subfamily.</text>
</comment>
<organism>
    <name type="scientific">Halobacterium salinarum (strain ATCC 700922 / JCM 11081 / NRC-1)</name>
    <name type="common">Halobacterium halobium</name>
    <dbReference type="NCBI Taxonomy" id="64091"/>
    <lineage>
        <taxon>Archaea</taxon>
        <taxon>Methanobacteriati</taxon>
        <taxon>Methanobacteriota</taxon>
        <taxon>Stenosarchaea group</taxon>
        <taxon>Halobacteria</taxon>
        <taxon>Halobacteriales</taxon>
        <taxon>Halobacteriaceae</taxon>
        <taxon>Halobacterium</taxon>
        <taxon>Halobacterium salinarum NRC-34001</taxon>
    </lineage>
</organism>
<reference key="1">
    <citation type="journal article" date="2000" name="Proc. Natl. Acad. Sci. U.S.A.">
        <title>Genome sequence of Halobacterium species NRC-1.</title>
        <authorList>
            <person name="Ng W.V."/>
            <person name="Kennedy S.P."/>
            <person name="Mahairas G.G."/>
            <person name="Berquist B."/>
            <person name="Pan M."/>
            <person name="Shukla H.D."/>
            <person name="Lasky S.R."/>
            <person name="Baliga N.S."/>
            <person name="Thorsson V."/>
            <person name="Sbrogna J."/>
            <person name="Swartzell S."/>
            <person name="Weir D."/>
            <person name="Hall J."/>
            <person name="Dahl T.A."/>
            <person name="Welti R."/>
            <person name="Goo Y.A."/>
            <person name="Leithauser B."/>
            <person name="Keller K."/>
            <person name="Cruz R."/>
            <person name="Danson M.J."/>
            <person name="Hough D.W."/>
            <person name="Maddocks D.G."/>
            <person name="Jablonski P.E."/>
            <person name="Krebs M.P."/>
            <person name="Angevine C.M."/>
            <person name="Dale H."/>
            <person name="Isenbarger T.A."/>
            <person name="Peck R.F."/>
            <person name="Pohlschroder M."/>
            <person name="Spudich J.L."/>
            <person name="Jung K.-H."/>
            <person name="Alam M."/>
            <person name="Freitas T."/>
            <person name="Hou S."/>
            <person name="Daniels C.J."/>
            <person name="Dennis P.P."/>
            <person name="Omer A.D."/>
            <person name="Ebhardt H."/>
            <person name="Lowe T.M."/>
            <person name="Liang P."/>
            <person name="Riley M."/>
            <person name="Hood L."/>
            <person name="DasSarma S."/>
        </authorList>
    </citation>
    <scope>NUCLEOTIDE SEQUENCE [LARGE SCALE GENOMIC DNA]</scope>
    <source>
        <strain>ATCC 700922 / JCM 11081 / NRC-1</strain>
    </source>
</reference>
<feature type="chain" id="PRO_0000057288" description="Deoxyribose-phosphate aldolase">
    <location>
        <begin position="1"/>
        <end position="212"/>
    </location>
</feature>
<feature type="active site" description="Proton donor/acceptor" evidence="1">
    <location>
        <position position="90"/>
    </location>
</feature>
<feature type="active site" description="Schiff-base intermediate with acetaldehyde" evidence="1">
    <location>
        <position position="151"/>
    </location>
</feature>
<feature type="active site" description="Proton donor/acceptor" evidence="1">
    <location>
        <position position="176"/>
    </location>
</feature>
<accession>Q9HP08</accession>
<keyword id="KW-0963">Cytoplasm</keyword>
<keyword id="KW-0456">Lyase</keyword>
<keyword id="KW-1185">Reference proteome</keyword>
<keyword id="KW-0704">Schiff base</keyword>
<sequence length="212" mass="21472">MDRETLAARIDHTVLGPTTTRADVLSVVDDAEAHGMNVCIPPCYVADARDHASADRTIATVIGFPHGTQATSVKVAAAEHAHADGADELDLVIPIGRLKGGDHEAVTAEIAAVNDATPLPVKVIIETPVLTDAEKHAACEAAADADAAMVKTATGFTDGGATVPDVSLMSEYLPVKASGGVGTYADAAAMFDAGAVRIGASSGVDIVASFAE</sequence>
<proteinExistence type="inferred from homology"/>
<protein>
    <recommendedName>
        <fullName evidence="1">Deoxyribose-phosphate aldolase</fullName>
        <shortName evidence="1">DERA</shortName>
        <ecNumber evidence="1">4.1.2.4</ecNumber>
    </recommendedName>
    <alternativeName>
        <fullName evidence="1">2-deoxy-D-ribose 5-phosphate aldolase</fullName>
    </alternativeName>
    <alternativeName>
        <fullName evidence="1">Phosphodeoxyriboaldolase</fullName>
        <shortName evidence="1">Deoxyriboaldolase</shortName>
    </alternativeName>
</protein>
<dbReference type="EC" id="4.1.2.4" evidence="1"/>
<dbReference type="EMBL" id="AE004437">
    <property type="protein sequence ID" value="AAG20062.1"/>
    <property type="molecule type" value="Genomic_DNA"/>
</dbReference>
<dbReference type="PIR" id="B84337">
    <property type="entry name" value="B84337"/>
</dbReference>
<dbReference type="RefSeq" id="WP_010903361.1">
    <property type="nucleotide sequence ID" value="NC_002607.1"/>
</dbReference>
<dbReference type="SMR" id="Q9HP08"/>
<dbReference type="STRING" id="64091.VNG_1859G"/>
<dbReference type="PaxDb" id="64091-VNG_1859G"/>
<dbReference type="GeneID" id="68694482"/>
<dbReference type="KEGG" id="hal:VNG_1859G"/>
<dbReference type="PATRIC" id="fig|64091.14.peg.1419"/>
<dbReference type="HOGENOM" id="CLU_053595_0_1_2"/>
<dbReference type="InParanoid" id="Q9HP08"/>
<dbReference type="OrthoDB" id="31145at2157"/>
<dbReference type="PhylomeDB" id="Q9HP08"/>
<dbReference type="UniPathway" id="UPA00002">
    <property type="reaction ID" value="UER00468"/>
</dbReference>
<dbReference type="Proteomes" id="UP000000554">
    <property type="component" value="Chromosome"/>
</dbReference>
<dbReference type="GO" id="GO:0005737">
    <property type="term" value="C:cytoplasm"/>
    <property type="evidence" value="ECO:0007669"/>
    <property type="project" value="UniProtKB-SubCell"/>
</dbReference>
<dbReference type="GO" id="GO:0004139">
    <property type="term" value="F:deoxyribose-phosphate aldolase activity"/>
    <property type="evidence" value="ECO:0000318"/>
    <property type="project" value="GO_Central"/>
</dbReference>
<dbReference type="GO" id="GO:0006018">
    <property type="term" value="P:2-deoxyribose 1-phosphate catabolic process"/>
    <property type="evidence" value="ECO:0007669"/>
    <property type="project" value="UniProtKB-UniRule"/>
</dbReference>
<dbReference type="GO" id="GO:0016052">
    <property type="term" value="P:carbohydrate catabolic process"/>
    <property type="evidence" value="ECO:0000318"/>
    <property type="project" value="GO_Central"/>
</dbReference>
<dbReference type="GO" id="GO:0009264">
    <property type="term" value="P:deoxyribonucleotide catabolic process"/>
    <property type="evidence" value="ECO:0000318"/>
    <property type="project" value="GO_Central"/>
</dbReference>
<dbReference type="CDD" id="cd00959">
    <property type="entry name" value="DeoC"/>
    <property type="match status" value="1"/>
</dbReference>
<dbReference type="FunFam" id="3.20.20.70:FF:000044">
    <property type="entry name" value="Deoxyribose-phosphate aldolase"/>
    <property type="match status" value="1"/>
</dbReference>
<dbReference type="Gene3D" id="3.20.20.70">
    <property type="entry name" value="Aldolase class I"/>
    <property type="match status" value="1"/>
</dbReference>
<dbReference type="HAMAP" id="MF_00114">
    <property type="entry name" value="DeoC_type1"/>
    <property type="match status" value="1"/>
</dbReference>
<dbReference type="InterPro" id="IPR013785">
    <property type="entry name" value="Aldolase_TIM"/>
</dbReference>
<dbReference type="InterPro" id="IPR011343">
    <property type="entry name" value="DeoC"/>
</dbReference>
<dbReference type="InterPro" id="IPR002915">
    <property type="entry name" value="DeoC/FbaB/LacD_aldolase"/>
</dbReference>
<dbReference type="InterPro" id="IPR028581">
    <property type="entry name" value="DeoC_typeI"/>
</dbReference>
<dbReference type="NCBIfam" id="TIGR00126">
    <property type="entry name" value="deoC"/>
    <property type="match status" value="1"/>
</dbReference>
<dbReference type="PANTHER" id="PTHR10889">
    <property type="entry name" value="DEOXYRIBOSE-PHOSPHATE ALDOLASE"/>
    <property type="match status" value="1"/>
</dbReference>
<dbReference type="PANTHER" id="PTHR10889:SF1">
    <property type="entry name" value="DEOXYRIBOSE-PHOSPHATE ALDOLASE"/>
    <property type="match status" value="1"/>
</dbReference>
<dbReference type="Pfam" id="PF01791">
    <property type="entry name" value="DeoC"/>
    <property type="match status" value="1"/>
</dbReference>
<dbReference type="PIRSF" id="PIRSF001357">
    <property type="entry name" value="DeoC"/>
    <property type="match status" value="1"/>
</dbReference>
<dbReference type="SMART" id="SM01133">
    <property type="entry name" value="DeoC"/>
    <property type="match status" value="1"/>
</dbReference>
<dbReference type="SUPFAM" id="SSF51569">
    <property type="entry name" value="Aldolase"/>
    <property type="match status" value="1"/>
</dbReference>
<evidence type="ECO:0000255" key="1">
    <source>
        <dbReference type="HAMAP-Rule" id="MF_00114"/>
    </source>
</evidence>
<name>DEOC_HALSA</name>
<gene>
    <name evidence="1" type="primary">deoC</name>
    <name type="ordered locus">VNG_1859G</name>
</gene>